<dbReference type="PIR" id="A61492">
    <property type="entry name" value="A61492"/>
</dbReference>
<dbReference type="SMR" id="P67941"/>
<dbReference type="GO" id="GO:0005576">
    <property type="term" value="C:extracellular region"/>
    <property type="evidence" value="ECO:0007669"/>
    <property type="project" value="UniProtKB-SubCell"/>
</dbReference>
<dbReference type="GO" id="GO:0004867">
    <property type="term" value="F:serine-type endopeptidase inhibitor activity"/>
    <property type="evidence" value="ECO:0007669"/>
    <property type="project" value="UniProtKB-KW"/>
</dbReference>
<dbReference type="CDD" id="cd00104">
    <property type="entry name" value="KAZAL_FS"/>
    <property type="match status" value="1"/>
</dbReference>
<dbReference type="FunFam" id="3.30.60.30:FF:000037">
    <property type="entry name" value="Ovomucoid"/>
    <property type="match status" value="1"/>
</dbReference>
<dbReference type="Gene3D" id="3.30.60.30">
    <property type="match status" value="1"/>
</dbReference>
<dbReference type="InterPro" id="IPR051597">
    <property type="entry name" value="Bifunctional_prot_inhibitor"/>
</dbReference>
<dbReference type="InterPro" id="IPR002350">
    <property type="entry name" value="Kazal_dom"/>
</dbReference>
<dbReference type="InterPro" id="IPR036058">
    <property type="entry name" value="Kazal_dom_sf"/>
</dbReference>
<dbReference type="InterPro" id="IPR001239">
    <property type="entry name" value="Prot_inh_Kazal-m"/>
</dbReference>
<dbReference type="PANTHER" id="PTHR47729:SF1">
    <property type="entry name" value="OVOMUCOID-LIKE-RELATED"/>
    <property type="match status" value="1"/>
</dbReference>
<dbReference type="PANTHER" id="PTHR47729">
    <property type="entry name" value="SERINE PEPTIDASE INHIBITOR, KAZAL TYPE 2, TANDEM DUPLICATE 1-RELATED"/>
    <property type="match status" value="1"/>
</dbReference>
<dbReference type="Pfam" id="PF00050">
    <property type="entry name" value="Kazal_1"/>
    <property type="match status" value="1"/>
</dbReference>
<dbReference type="PRINTS" id="PR00290">
    <property type="entry name" value="KAZALINHBTR"/>
</dbReference>
<dbReference type="SMART" id="SM00280">
    <property type="entry name" value="KAZAL"/>
    <property type="match status" value="1"/>
</dbReference>
<dbReference type="SUPFAM" id="SSF100895">
    <property type="entry name" value="Kazal-type serine protease inhibitors"/>
    <property type="match status" value="1"/>
</dbReference>
<dbReference type="PROSITE" id="PS00282">
    <property type="entry name" value="KAZAL_1"/>
    <property type="match status" value="1"/>
</dbReference>
<dbReference type="PROSITE" id="PS51465">
    <property type="entry name" value="KAZAL_2"/>
    <property type="match status" value="1"/>
</dbReference>
<keyword id="KW-0903">Direct protein sequencing</keyword>
<keyword id="KW-1015">Disulfide bond</keyword>
<keyword id="KW-0325">Glycoprotein</keyword>
<keyword id="KW-0646">Protease inhibitor</keyword>
<keyword id="KW-0677">Repeat</keyword>
<keyword id="KW-0964">Secreted</keyword>
<keyword id="KW-0722">Serine protease inhibitor</keyword>
<evidence type="ECO:0000255" key="1">
    <source>
        <dbReference type="PROSITE-ProRule" id="PRU00798"/>
    </source>
</evidence>
<name>IOVO_PYGAD</name>
<accession>P67941</accession>
<accession>P52257</accession>
<sequence length="54" mass="5829">IATVDCSDYPKPVCSLEYMPLCGSDSKTYSNKCNFCNAVVDSNGTLTLSHFGKC</sequence>
<comment type="subcellular location">
    <subcellularLocation>
        <location>Secreted</location>
    </subcellularLocation>
</comment>
<comment type="domain">
    <text>Avian ovomucoid consists of three homologous, tandem Kazal family inhibitory domains.</text>
</comment>
<protein>
    <recommendedName>
        <fullName>Ovomucoid</fullName>
    </recommendedName>
</protein>
<reference key="1">
    <citation type="journal article" date="1990" name="J. Protein Chem.">
        <title>Amino acid sequences of ovomucoid third domain from 25 additional species of birds.</title>
        <authorList>
            <person name="Laskowski M. Jr."/>
            <person name="Apostol I."/>
            <person name="Ardelt W."/>
            <person name="Cook J."/>
            <person name="Giletto A."/>
            <person name="Kelly C.A."/>
            <person name="Lu W."/>
            <person name="Park S.J."/>
            <person name="Qasim M.A."/>
            <person name="Whatley H.E."/>
            <person name="Wieczorek A."/>
            <person name="Wynn R."/>
        </authorList>
    </citation>
    <scope>PROTEIN SEQUENCE</scope>
</reference>
<feature type="chain" id="PRO_0000073172" description="Ovomucoid">
    <location>
        <begin position="1" status="less than"/>
        <end position="54" status="greater than"/>
    </location>
</feature>
<feature type="domain" description="Kazal-like" evidence="1">
    <location>
        <begin position="4"/>
        <end position="54"/>
    </location>
</feature>
<feature type="site" description="Reactive bond 3">
    <location>
        <begin position="16"/>
        <end position="17"/>
    </location>
</feature>
<feature type="glycosylation site" description="N-linked (GlcNAc...) asparagine">
    <location>
        <position position="43"/>
    </location>
</feature>
<feature type="disulfide bond">
    <location>
        <begin position="6"/>
        <end position="36"/>
    </location>
</feature>
<feature type="disulfide bond">
    <location>
        <begin position="14"/>
        <end position="33"/>
    </location>
</feature>
<feature type="disulfide bond">
    <location>
        <begin position="22"/>
        <end position="54"/>
    </location>
</feature>
<feature type="non-terminal residue">
    <location>
        <position position="1"/>
    </location>
</feature>
<feature type="non-terminal residue">
    <location>
        <position position="54"/>
    </location>
</feature>
<proteinExistence type="evidence at protein level"/>
<organism>
    <name type="scientific">Pygoscelis adeliae</name>
    <name type="common">Adelie penguin</name>
    <dbReference type="NCBI Taxonomy" id="9238"/>
    <lineage>
        <taxon>Eukaryota</taxon>
        <taxon>Metazoa</taxon>
        <taxon>Chordata</taxon>
        <taxon>Craniata</taxon>
        <taxon>Vertebrata</taxon>
        <taxon>Euteleostomi</taxon>
        <taxon>Archelosauria</taxon>
        <taxon>Archosauria</taxon>
        <taxon>Dinosauria</taxon>
        <taxon>Saurischia</taxon>
        <taxon>Theropoda</taxon>
        <taxon>Coelurosauria</taxon>
        <taxon>Aves</taxon>
        <taxon>Neognathae</taxon>
        <taxon>Neoaves</taxon>
        <taxon>Aequornithes</taxon>
        <taxon>Sphenisciformes</taxon>
        <taxon>Spheniscidae</taxon>
        <taxon>Pygoscelis</taxon>
    </lineage>
</organism>